<accession>C4ZWB5</accession>
<dbReference type="EC" id="2.8.1.8" evidence="1"/>
<dbReference type="EMBL" id="CP001396">
    <property type="protein sequence ID" value="ACR63656.1"/>
    <property type="molecule type" value="Genomic_DNA"/>
</dbReference>
<dbReference type="RefSeq" id="WP_000042632.1">
    <property type="nucleotide sequence ID" value="NC_012759.1"/>
</dbReference>
<dbReference type="SMR" id="C4ZWB5"/>
<dbReference type="GeneID" id="93776854"/>
<dbReference type="KEGG" id="ebw:BWG_0499"/>
<dbReference type="HOGENOM" id="CLU_033144_2_1_6"/>
<dbReference type="UniPathway" id="UPA00538">
    <property type="reaction ID" value="UER00593"/>
</dbReference>
<dbReference type="GO" id="GO:0005737">
    <property type="term" value="C:cytoplasm"/>
    <property type="evidence" value="ECO:0007669"/>
    <property type="project" value="UniProtKB-SubCell"/>
</dbReference>
<dbReference type="GO" id="GO:0051539">
    <property type="term" value="F:4 iron, 4 sulfur cluster binding"/>
    <property type="evidence" value="ECO:0007669"/>
    <property type="project" value="UniProtKB-UniRule"/>
</dbReference>
<dbReference type="GO" id="GO:0016992">
    <property type="term" value="F:lipoate synthase activity"/>
    <property type="evidence" value="ECO:0007669"/>
    <property type="project" value="UniProtKB-UniRule"/>
</dbReference>
<dbReference type="GO" id="GO:0046872">
    <property type="term" value="F:metal ion binding"/>
    <property type="evidence" value="ECO:0007669"/>
    <property type="project" value="UniProtKB-KW"/>
</dbReference>
<dbReference type="CDD" id="cd01335">
    <property type="entry name" value="Radical_SAM"/>
    <property type="match status" value="1"/>
</dbReference>
<dbReference type="FunFam" id="3.20.20.70:FF:000023">
    <property type="entry name" value="Lipoyl synthase"/>
    <property type="match status" value="1"/>
</dbReference>
<dbReference type="Gene3D" id="3.20.20.70">
    <property type="entry name" value="Aldolase class I"/>
    <property type="match status" value="1"/>
</dbReference>
<dbReference type="HAMAP" id="MF_00206">
    <property type="entry name" value="Lipoyl_synth"/>
    <property type="match status" value="1"/>
</dbReference>
<dbReference type="InterPro" id="IPR013785">
    <property type="entry name" value="Aldolase_TIM"/>
</dbReference>
<dbReference type="InterPro" id="IPR006638">
    <property type="entry name" value="Elp3/MiaA/NifB-like_rSAM"/>
</dbReference>
<dbReference type="InterPro" id="IPR031691">
    <property type="entry name" value="LIAS_N"/>
</dbReference>
<dbReference type="InterPro" id="IPR003698">
    <property type="entry name" value="Lipoyl_synth"/>
</dbReference>
<dbReference type="InterPro" id="IPR007197">
    <property type="entry name" value="rSAM"/>
</dbReference>
<dbReference type="NCBIfam" id="TIGR00510">
    <property type="entry name" value="lipA"/>
    <property type="match status" value="1"/>
</dbReference>
<dbReference type="NCBIfam" id="NF004019">
    <property type="entry name" value="PRK05481.1"/>
    <property type="match status" value="1"/>
</dbReference>
<dbReference type="NCBIfam" id="NF009544">
    <property type="entry name" value="PRK12928.1"/>
    <property type="match status" value="1"/>
</dbReference>
<dbReference type="PANTHER" id="PTHR10949">
    <property type="entry name" value="LIPOYL SYNTHASE"/>
    <property type="match status" value="1"/>
</dbReference>
<dbReference type="PANTHER" id="PTHR10949:SF0">
    <property type="entry name" value="LIPOYL SYNTHASE, MITOCHONDRIAL"/>
    <property type="match status" value="1"/>
</dbReference>
<dbReference type="Pfam" id="PF16881">
    <property type="entry name" value="LIAS_N"/>
    <property type="match status" value="1"/>
</dbReference>
<dbReference type="Pfam" id="PF04055">
    <property type="entry name" value="Radical_SAM"/>
    <property type="match status" value="1"/>
</dbReference>
<dbReference type="PIRSF" id="PIRSF005963">
    <property type="entry name" value="Lipoyl_synth"/>
    <property type="match status" value="1"/>
</dbReference>
<dbReference type="SFLD" id="SFLDF00271">
    <property type="entry name" value="lipoyl_synthase"/>
    <property type="match status" value="1"/>
</dbReference>
<dbReference type="SFLD" id="SFLDG01058">
    <property type="entry name" value="lipoyl_synthase_like"/>
    <property type="match status" value="1"/>
</dbReference>
<dbReference type="SMART" id="SM00729">
    <property type="entry name" value="Elp3"/>
    <property type="match status" value="1"/>
</dbReference>
<dbReference type="SUPFAM" id="SSF102114">
    <property type="entry name" value="Radical SAM enzymes"/>
    <property type="match status" value="1"/>
</dbReference>
<dbReference type="PROSITE" id="PS51918">
    <property type="entry name" value="RADICAL_SAM"/>
    <property type="match status" value="1"/>
</dbReference>
<evidence type="ECO:0000255" key="1">
    <source>
        <dbReference type="HAMAP-Rule" id="MF_00206"/>
    </source>
</evidence>
<evidence type="ECO:0000255" key="2">
    <source>
        <dbReference type="PROSITE-ProRule" id="PRU01266"/>
    </source>
</evidence>
<protein>
    <recommendedName>
        <fullName evidence="1">Lipoyl synthase</fullName>
        <ecNumber evidence="1">2.8.1.8</ecNumber>
    </recommendedName>
    <alternativeName>
        <fullName evidence="1">Lip-syn</fullName>
        <shortName evidence="1">LS</shortName>
    </alternativeName>
    <alternativeName>
        <fullName evidence="1">Lipoate synthase</fullName>
    </alternativeName>
    <alternativeName>
        <fullName evidence="1">Lipoic acid synthase</fullName>
    </alternativeName>
    <alternativeName>
        <fullName evidence="1">Sulfur insertion protein LipA</fullName>
    </alternativeName>
</protein>
<sequence>MSKPIVMERGVKYRDADKMALIPVKNVATEREALLRKPEWMKIKLPADSTRIQGIKAAMRKNGLHSVCEEASCPNLAECFNHGTATFMILGAICTRRCPFCDVAHGRPVAPDANEPVKLAQTIADMALRYVVITSVDRDDLRDGGAQHFADCITAIREKSPQIKIETLVPDFRGRMDRALDILTATPPDVFNHNLENVPRIYRQVRPGADYNWSLKLLERFKEAHPEIPTKSGLMVGLGETNEEIIEVMRDLRRHGVTMLTLGQYLQPSRHHLPVQRYVSPDEFDEMKAEALAMGFTHAACGPFVRSSYHADLQAKGMEVK</sequence>
<comment type="function">
    <text evidence="1">Catalyzes the radical-mediated insertion of two sulfur atoms into the C-6 and C-8 positions of the octanoyl moiety bound to the lipoyl domains of lipoate-dependent enzymes, thereby converting the octanoylated domains into lipoylated derivatives.</text>
</comment>
<comment type="catalytic activity">
    <reaction evidence="1">
        <text>[[Fe-S] cluster scaffold protein carrying a second [4Fe-4S](2+) cluster] + N(6)-octanoyl-L-lysyl-[protein] + 2 oxidized [2Fe-2S]-[ferredoxin] + 2 S-adenosyl-L-methionine + 4 H(+) = [[Fe-S] cluster scaffold protein] + N(6)-[(R)-dihydrolipoyl]-L-lysyl-[protein] + 4 Fe(3+) + 2 hydrogen sulfide + 2 5'-deoxyadenosine + 2 L-methionine + 2 reduced [2Fe-2S]-[ferredoxin]</text>
        <dbReference type="Rhea" id="RHEA:16585"/>
        <dbReference type="Rhea" id="RHEA-COMP:9928"/>
        <dbReference type="Rhea" id="RHEA-COMP:10000"/>
        <dbReference type="Rhea" id="RHEA-COMP:10001"/>
        <dbReference type="Rhea" id="RHEA-COMP:10475"/>
        <dbReference type="Rhea" id="RHEA-COMP:14568"/>
        <dbReference type="Rhea" id="RHEA-COMP:14569"/>
        <dbReference type="ChEBI" id="CHEBI:15378"/>
        <dbReference type="ChEBI" id="CHEBI:17319"/>
        <dbReference type="ChEBI" id="CHEBI:29034"/>
        <dbReference type="ChEBI" id="CHEBI:29919"/>
        <dbReference type="ChEBI" id="CHEBI:33722"/>
        <dbReference type="ChEBI" id="CHEBI:33737"/>
        <dbReference type="ChEBI" id="CHEBI:33738"/>
        <dbReference type="ChEBI" id="CHEBI:57844"/>
        <dbReference type="ChEBI" id="CHEBI:59789"/>
        <dbReference type="ChEBI" id="CHEBI:78809"/>
        <dbReference type="ChEBI" id="CHEBI:83100"/>
        <dbReference type="EC" id="2.8.1.8"/>
    </reaction>
</comment>
<comment type="cofactor">
    <cofactor evidence="1">
        <name>[4Fe-4S] cluster</name>
        <dbReference type="ChEBI" id="CHEBI:49883"/>
    </cofactor>
    <text evidence="1">Binds 2 [4Fe-4S] clusters per subunit. One cluster is coordinated with 3 cysteines and an exchangeable S-adenosyl-L-methionine.</text>
</comment>
<comment type="pathway">
    <text evidence="1">Protein modification; protein lipoylation via endogenous pathway; protein N(6)-(lipoyl)lysine from octanoyl-[acyl-carrier-protein]: step 2/2.</text>
</comment>
<comment type="subcellular location">
    <subcellularLocation>
        <location evidence="1">Cytoplasm</location>
    </subcellularLocation>
</comment>
<comment type="similarity">
    <text evidence="1">Belongs to the radical SAM superfamily. Lipoyl synthase family.</text>
</comment>
<organism>
    <name type="scientific">Escherichia coli (strain K12 / MC4100 / BW2952)</name>
    <dbReference type="NCBI Taxonomy" id="595496"/>
    <lineage>
        <taxon>Bacteria</taxon>
        <taxon>Pseudomonadati</taxon>
        <taxon>Pseudomonadota</taxon>
        <taxon>Gammaproteobacteria</taxon>
        <taxon>Enterobacterales</taxon>
        <taxon>Enterobacteriaceae</taxon>
        <taxon>Escherichia</taxon>
    </lineage>
</organism>
<proteinExistence type="inferred from homology"/>
<gene>
    <name evidence="1" type="primary">lipA</name>
    <name type="ordered locus">BWG_0499</name>
</gene>
<feature type="chain" id="PRO_1000204146" description="Lipoyl synthase">
    <location>
        <begin position="1"/>
        <end position="321"/>
    </location>
</feature>
<feature type="domain" description="Radical SAM core" evidence="2">
    <location>
        <begin position="80"/>
        <end position="297"/>
    </location>
</feature>
<feature type="binding site" evidence="1">
    <location>
        <position position="68"/>
    </location>
    <ligand>
        <name>[4Fe-4S] cluster</name>
        <dbReference type="ChEBI" id="CHEBI:49883"/>
        <label>1</label>
    </ligand>
</feature>
<feature type="binding site" evidence="1">
    <location>
        <position position="73"/>
    </location>
    <ligand>
        <name>[4Fe-4S] cluster</name>
        <dbReference type="ChEBI" id="CHEBI:49883"/>
        <label>1</label>
    </ligand>
</feature>
<feature type="binding site" evidence="1">
    <location>
        <position position="79"/>
    </location>
    <ligand>
        <name>[4Fe-4S] cluster</name>
        <dbReference type="ChEBI" id="CHEBI:49883"/>
        <label>1</label>
    </ligand>
</feature>
<feature type="binding site" evidence="1">
    <location>
        <position position="94"/>
    </location>
    <ligand>
        <name>[4Fe-4S] cluster</name>
        <dbReference type="ChEBI" id="CHEBI:49883"/>
        <label>2</label>
        <note>4Fe-4S-S-AdoMet</note>
    </ligand>
</feature>
<feature type="binding site" evidence="1">
    <location>
        <position position="98"/>
    </location>
    <ligand>
        <name>[4Fe-4S] cluster</name>
        <dbReference type="ChEBI" id="CHEBI:49883"/>
        <label>2</label>
        <note>4Fe-4S-S-AdoMet</note>
    </ligand>
</feature>
<feature type="binding site" evidence="1">
    <location>
        <position position="101"/>
    </location>
    <ligand>
        <name>[4Fe-4S] cluster</name>
        <dbReference type="ChEBI" id="CHEBI:49883"/>
        <label>2</label>
        <note>4Fe-4S-S-AdoMet</note>
    </ligand>
</feature>
<feature type="binding site" evidence="1">
    <location>
        <position position="308"/>
    </location>
    <ligand>
        <name>[4Fe-4S] cluster</name>
        <dbReference type="ChEBI" id="CHEBI:49883"/>
        <label>1</label>
    </ligand>
</feature>
<reference key="1">
    <citation type="journal article" date="2009" name="J. Bacteriol.">
        <title>Genomic sequencing reveals regulatory mutations and recombinational events in the widely used MC4100 lineage of Escherichia coli K-12.</title>
        <authorList>
            <person name="Ferenci T."/>
            <person name="Zhou Z."/>
            <person name="Betteridge T."/>
            <person name="Ren Y."/>
            <person name="Liu Y."/>
            <person name="Feng L."/>
            <person name="Reeves P.R."/>
            <person name="Wang L."/>
        </authorList>
    </citation>
    <scope>NUCLEOTIDE SEQUENCE [LARGE SCALE GENOMIC DNA]</scope>
    <source>
        <strain>K12 / MC4100 / BW2952</strain>
    </source>
</reference>
<name>LIPA_ECOBW</name>
<keyword id="KW-0004">4Fe-4S</keyword>
<keyword id="KW-0963">Cytoplasm</keyword>
<keyword id="KW-0408">Iron</keyword>
<keyword id="KW-0411">Iron-sulfur</keyword>
<keyword id="KW-0479">Metal-binding</keyword>
<keyword id="KW-0949">S-adenosyl-L-methionine</keyword>
<keyword id="KW-0808">Transferase</keyword>